<keyword id="KW-0227">DNA damage</keyword>
<keyword id="KW-0233">DNA recombination</keyword>
<keyword id="KW-0234">DNA repair</keyword>
<keyword id="KW-0479">Metal-binding</keyword>
<keyword id="KW-0862">Zinc</keyword>
<keyword id="KW-0863">Zinc-finger</keyword>
<reference key="1">
    <citation type="submission" date="2007-07" db="EMBL/GenBank/DDBJ databases">
        <title>Complete genome sequence of Campylobacter jejuni subsp doylei 269.97 isolated from human blood.</title>
        <authorList>
            <person name="Fouts D.E."/>
            <person name="Mongodin E.F."/>
            <person name="Puiu D."/>
            <person name="Sebastian Y."/>
            <person name="Miller W.G."/>
            <person name="Mandrell R.E."/>
            <person name="Lastovica A.J."/>
            <person name="Nelson K.E."/>
        </authorList>
    </citation>
    <scope>NUCLEOTIDE SEQUENCE [LARGE SCALE GENOMIC DNA]</scope>
    <source>
        <strain>ATCC BAA-1458 / RM4099 / 269.97</strain>
    </source>
</reference>
<evidence type="ECO:0000255" key="1">
    <source>
        <dbReference type="HAMAP-Rule" id="MF_00017"/>
    </source>
</evidence>
<gene>
    <name evidence="1" type="primary">recR</name>
    <name type="ordered locus">JJD26997_0461</name>
</gene>
<sequence>MAKGLEKFNELVESFANLPTIGKKTAIRLAYHLCINNQIDGMKLAHNIENAIRFIKPCEQCGALSENELCEICSDEERSKNILCIVESPKDILTLEESQSYNGLYFVLDELNEEKLEKLKQILLKLNISELIFALTHSINSDATIFFIEDKFKDLNLTFSKIAQGIPSGVNLENVDLISLNKAMNFRTKI</sequence>
<proteinExistence type="inferred from homology"/>
<accession>A7H2B7</accession>
<protein>
    <recommendedName>
        <fullName evidence="1">Recombination protein RecR</fullName>
    </recommendedName>
</protein>
<name>RECR_CAMJD</name>
<feature type="chain" id="PRO_0000322875" description="Recombination protein RecR">
    <location>
        <begin position="1"/>
        <end position="190"/>
    </location>
</feature>
<feature type="domain" description="Toprim" evidence="1">
    <location>
        <begin position="81"/>
        <end position="167"/>
    </location>
</feature>
<feature type="zinc finger region" description="C4-type" evidence="1">
    <location>
        <begin position="58"/>
        <end position="73"/>
    </location>
</feature>
<organism>
    <name type="scientific">Campylobacter jejuni subsp. doylei (strain ATCC BAA-1458 / RM4099 / 269.97)</name>
    <dbReference type="NCBI Taxonomy" id="360109"/>
    <lineage>
        <taxon>Bacteria</taxon>
        <taxon>Pseudomonadati</taxon>
        <taxon>Campylobacterota</taxon>
        <taxon>Epsilonproteobacteria</taxon>
        <taxon>Campylobacterales</taxon>
        <taxon>Campylobacteraceae</taxon>
        <taxon>Campylobacter</taxon>
    </lineage>
</organism>
<comment type="function">
    <text evidence="1">May play a role in DNA repair. It seems to be involved in an RecBC-independent recombinational process of DNA repair. It may act with RecF and RecO.</text>
</comment>
<comment type="similarity">
    <text evidence="1">Belongs to the RecR family.</text>
</comment>
<dbReference type="EMBL" id="CP000768">
    <property type="protein sequence ID" value="ABS43869.1"/>
    <property type="molecule type" value="Genomic_DNA"/>
</dbReference>
<dbReference type="SMR" id="A7H2B7"/>
<dbReference type="KEGG" id="cjd:JJD26997_0461"/>
<dbReference type="HOGENOM" id="CLU_060739_1_1_7"/>
<dbReference type="Proteomes" id="UP000002302">
    <property type="component" value="Chromosome"/>
</dbReference>
<dbReference type="GO" id="GO:0003677">
    <property type="term" value="F:DNA binding"/>
    <property type="evidence" value="ECO:0007669"/>
    <property type="project" value="UniProtKB-UniRule"/>
</dbReference>
<dbReference type="GO" id="GO:0008270">
    <property type="term" value="F:zinc ion binding"/>
    <property type="evidence" value="ECO:0007669"/>
    <property type="project" value="UniProtKB-KW"/>
</dbReference>
<dbReference type="GO" id="GO:0006310">
    <property type="term" value="P:DNA recombination"/>
    <property type="evidence" value="ECO:0007669"/>
    <property type="project" value="UniProtKB-UniRule"/>
</dbReference>
<dbReference type="GO" id="GO:0006281">
    <property type="term" value="P:DNA repair"/>
    <property type="evidence" value="ECO:0007669"/>
    <property type="project" value="UniProtKB-UniRule"/>
</dbReference>
<dbReference type="CDD" id="cd01025">
    <property type="entry name" value="TOPRIM_recR"/>
    <property type="match status" value="1"/>
</dbReference>
<dbReference type="Gene3D" id="3.30.60.80">
    <property type="match status" value="1"/>
</dbReference>
<dbReference type="Gene3D" id="3.40.1360.10">
    <property type="match status" value="1"/>
</dbReference>
<dbReference type="Gene3D" id="1.10.8.420">
    <property type="entry name" value="RecR Domain 1"/>
    <property type="match status" value="1"/>
</dbReference>
<dbReference type="HAMAP" id="MF_00017">
    <property type="entry name" value="RecR"/>
    <property type="match status" value="1"/>
</dbReference>
<dbReference type="InterPro" id="IPR000093">
    <property type="entry name" value="DNA_Rcmb_RecR"/>
</dbReference>
<dbReference type="InterPro" id="IPR023627">
    <property type="entry name" value="Rcmb_RecR"/>
</dbReference>
<dbReference type="InterPro" id="IPR015967">
    <property type="entry name" value="Rcmb_RecR_Znf"/>
</dbReference>
<dbReference type="InterPro" id="IPR006171">
    <property type="entry name" value="TOPRIM_dom"/>
</dbReference>
<dbReference type="InterPro" id="IPR034137">
    <property type="entry name" value="TOPRIM_RecR"/>
</dbReference>
<dbReference type="NCBIfam" id="TIGR00615">
    <property type="entry name" value="recR"/>
    <property type="match status" value="1"/>
</dbReference>
<dbReference type="PANTHER" id="PTHR30446">
    <property type="entry name" value="RECOMBINATION PROTEIN RECR"/>
    <property type="match status" value="1"/>
</dbReference>
<dbReference type="PANTHER" id="PTHR30446:SF0">
    <property type="entry name" value="RECOMBINATION PROTEIN RECR"/>
    <property type="match status" value="1"/>
</dbReference>
<dbReference type="Pfam" id="PF21176">
    <property type="entry name" value="RecR_HhH"/>
    <property type="match status" value="1"/>
</dbReference>
<dbReference type="Pfam" id="PF02132">
    <property type="entry name" value="RecR_ZnF"/>
    <property type="match status" value="1"/>
</dbReference>
<dbReference type="Pfam" id="PF13662">
    <property type="entry name" value="Toprim_4"/>
    <property type="match status" value="1"/>
</dbReference>
<dbReference type="SUPFAM" id="SSF111304">
    <property type="entry name" value="Recombination protein RecR"/>
    <property type="match status" value="1"/>
</dbReference>
<dbReference type="PROSITE" id="PS01300">
    <property type="entry name" value="RECR"/>
    <property type="match status" value="1"/>
</dbReference>
<dbReference type="PROSITE" id="PS50880">
    <property type="entry name" value="TOPRIM"/>
    <property type="match status" value="1"/>
</dbReference>